<organism>
    <name type="scientific">Arabidopsis thaliana</name>
    <name type="common">Mouse-ear cress</name>
    <dbReference type="NCBI Taxonomy" id="3702"/>
    <lineage>
        <taxon>Eukaryota</taxon>
        <taxon>Viridiplantae</taxon>
        <taxon>Streptophyta</taxon>
        <taxon>Embryophyta</taxon>
        <taxon>Tracheophyta</taxon>
        <taxon>Spermatophyta</taxon>
        <taxon>Magnoliopsida</taxon>
        <taxon>eudicotyledons</taxon>
        <taxon>Gunneridae</taxon>
        <taxon>Pentapetalae</taxon>
        <taxon>rosids</taxon>
        <taxon>malvids</taxon>
        <taxon>Brassicales</taxon>
        <taxon>Brassicaceae</taxon>
        <taxon>Camelineae</taxon>
        <taxon>Arabidopsis</taxon>
    </lineage>
</organism>
<name>CYC1A_ARATH</name>
<evidence type="ECO:0000250" key="1"/>
<evidence type="ECO:0000250" key="2">
    <source>
        <dbReference type="UniProtKB" id="P07143"/>
    </source>
</evidence>
<evidence type="ECO:0000255" key="3"/>
<evidence type="ECO:0000255" key="4">
    <source>
        <dbReference type="PROSITE-ProRule" id="PRU00433"/>
    </source>
</evidence>
<evidence type="ECO:0000269" key="5">
    <source>
    </source>
</evidence>
<evidence type="ECO:0000269" key="6">
    <source>
    </source>
</evidence>
<evidence type="ECO:0000305" key="7"/>
<gene>
    <name type="primary">CYC1-1</name>
    <name type="ordered locus">At3g27240</name>
    <name type="ORF">K17E12.6</name>
</gene>
<protein>
    <recommendedName>
        <fullName>Cytochrome c1 1, heme protein, mitochondrial</fullName>
    </recommendedName>
    <alternativeName>
        <fullName>Complex III subunit 4-1</fullName>
    </alternativeName>
    <alternativeName>
        <fullName>Complex III subunit IV-1</fullName>
    </alternativeName>
    <alternativeName>
        <fullName>Cytochrome b-c1 complex subunit 4-1</fullName>
    </alternativeName>
    <alternativeName>
        <fullName>Ubiquinol-cytochrome c reductase complex cytochrome c1 subunit 1</fullName>
        <shortName>Cytochrome c-1 1</shortName>
    </alternativeName>
</protein>
<dbReference type="EMBL" id="AP000381">
    <property type="protein sequence ID" value="BAB02119.1"/>
    <property type="molecule type" value="Genomic_DNA"/>
</dbReference>
<dbReference type="EMBL" id="CP002686">
    <property type="protein sequence ID" value="AEE77282.1"/>
    <property type="molecule type" value="Genomic_DNA"/>
</dbReference>
<dbReference type="EMBL" id="AF458338">
    <property type="protein sequence ID" value="AAL51110.1"/>
    <property type="molecule type" value="mRNA"/>
</dbReference>
<dbReference type="EMBL" id="AY054246">
    <property type="protein sequence ID" value="AAL06905.1"/>
    <property type="molecule type" value="mRNA"/>
</dbReference>
<dbReference type="EMBL" id="AY088099">
    <property type="protein sequence ID" value="AAM65645.1"/>
    <property type="molecule type" value="mRNA"/>
</dbReference>
<dbReference type="RefSeq" id="NP_189360.1">
    <property type="nucleotide sequence ID" value="NM_113638.3"/>
</dbReference>
<dbReference type="SMR" id="Q9LK29"/>
<dbReference type="BioGRID" id="7673">
    <property type="interactions" value="14"/>
</dbReference>
<dbReference type="FunCoup" id="Q9LK29">
    <property type="interactions" value="3202"/>
</dbReference>
<dbReference type="IntAct" id="Q9LK29">
    <property type="interactions" value="3"/>
</dbReference>
<dbReference type="STRING" id="3702.Q9LK29"/>
<dbReference type="MetOSite" id="Q9LK29"/>
<dbReference type="PaxDb" id="3702-AT3G27240.1"/>
<dbReference type="ProteomicsDB" id="222665"/>
<dbReference type="EnsemblPlants" id="AT3G27240.1">
    <property type="protein sequence ID" value="AT3G27240.1"/>
    <property type="gene ID" value="AT3G27240"/>
</dbReference>
<dbReference type="GeneID" id="822343"/>
<dbReference type="Gramene" id="AT3G27240.1">
    <property type="protein sequence ID" value="AT3G27240.1"/>
    <property type="gene ID" value="AT3G27240"/>
</dbReference>
<dbReference type="KEGG" id="ath:AT3G27240"/>
<dbReference type="Araport" id="AT3G27240"/>
<dbReference type="TAIR" id="AT3G27240">
    <property type="gene designation" value="CYC1-1"/>
</dbReference>
<dbReference type="eggNOG" id="KOG3052">
    <property type="taxonomic scope" value="Eukaryota"/>
</dbReference>
<dbReference type="HOGENOM" id="CLU_040334_0_0_1"/>
<dbReference type="InParanoid" id="Q9LK29"/>
<dbReference type="OMA" id="WMDESIM"/>
<dbReference type="OrthoDB" id="5925at2759"/>
<dbReference type="PhylomeDB" id="Q9LK29"/>
<dbReference type="BioCyc" id="ARA:AT3G27240-MONOMER"/>
<dbReference type="BioCyc" id="MetaCyc:AT3G27240-MONOMER"/>
<dbReference type="CD-CODE" id="4299E36E">
    <property type="entry name" value="Nucleolus"/>
</dbReference>
<dbReference type="PRO" id="PR:Q9LK29"/>
<dbReference type="Proteomes" id="UP000006548">
    <property type="component" value="Chromosome 3"/>
</dbReference>
<dbReference type="ExpressionAtlas" id="Q9LK29">
    <property type="expression patterns" value="baseline and differential"/>
</dbReference>
<dbReference type="GO" id="GO:0005829">
    <property type="term" value="C:cytosol"/>
    <property type="evidence" value="ECO:0007005"/>
    <property type="project" value="TAIR"/>
</dbReference>
<dbReference type="GO" id="GO:0005743">
    <property type="term" value="C:mitochondrial inner membrane"/>
    <property type="evidence" value="ECO:0007669"/>
    <property type="project" value="UniProtKB-SubCell"/>
</dbReference>
<dbReference type="GO" id="GO:0005739">
    <property type="term" value="C:mitochondrion"/>
    <property type="evidence" value="ECO:0007005"/>
    <property type="project" value="TAIR"/>
</dbReference>
<dbReference type="GO" id="GO:0000325">
    <property type="term" value="C:plant-type vacuole"/>
    <property type="evidence" value="ECO:0007005"/>
    <property type="project" value="TAIR"/>
</dbReference>
<dbReference type="GO" id="GO:0005773">
    <property type="term" value="C:vacuole"/>
    <property type="evidence" value="ECO:0007005"/>
    <property type="project" value="TAIR"/>
</dbReference>
<dbReference type="GO" id="GO:0009055">
    <property type="term" value="F:electron transfer activity"/>
    <property type="evidence" value="ECO:0007669"/>
    <property type="project" value="InterPro"/>
</dbReference>
<dbReference type="GO" id="GO:0020037">
    <property type="term" value="F:heme binding"/>
    <property type="evidence" value="ECO:0007669"/>
    <property type="project" value="InterPro"/>
</dbReference>
<dbReference type="GO" id="GO:0046872">
    <property type="term" value="F:metal ion binding"/>
    <property type="evidence" value="ECO:0007669"/>
    <property type="project" value="UniProtKB-KW"/>
</dbReference>
<dbReference type="FunFam" id="1.10.760.10:FF:000002">
    <property type="entry name" value="Cytochrome c1, heme protein"/>
    <property type="match status" value="1"/>
</dbReference>
<dbReference type="FunFam" id="1.20.5.100:FF:000003">
    <property type="entry name" value="Cytochrome c1, heme protein, mitochondrial"/>
    <property type="match status" value="1"/>
</dbReference>
<dbReference type="Gene3D" id="1.10.760.10">
    <property type="entry name" value="Cytochrome c-like domain"/>
    <property type="match status" value="1"/>
</dbReference>
<dbReference type="Gene3D" id="1.20.5.100">
    <property type="entry name" value="Cytochrome c1, transmembrane anchor, C-terminal"/>
    <property type="match status" value="1"/>
</dbReference>
<dbReference type="InterPro" id="IPR009056">
    <property type="entry name" value="Cyt_c-like_dom"/>
</dbReference>
<dbReference type="InterPro" id="IPR036909">
    <property type="entry name" value="Cyt_c-like_dom_sf"/>
</dbReference>
<dbReference type="InterPro" id="IPR002326">
    <property type="entry name" value="Cyt_c1"/>
</dbReference>
<dbReference type="InterPro" id="IPR021157">
    <property type="entry name" value="Cyt_c1_TM_anchor_C"/>
</dbReference>
<dbReference type="PANTHER" id="PTHR10266">
    <property type="entry name" value="CYTOCHROME C1"/>
    <property type="match status" value="1"/>
</dbReference>
<dbReference type="PANTHER" id="PTHR10266:SF3">
    <property type="entry name" value="CYTOCHROME C1, HEME PROTEIN, MITOCHONDRIAL"/>
    <property type="match status" value="1"/>
</dbReference>
<dbReference type="Pfam" id="PF02167">
    <property type="entry name" value="Cytochrom_C1"/>
    <property type="match status" value="1"/>
</dbReference>
<dbReference type="PRINTS" id="PR00603">
    <property type="entry name" value="CYTOCHROMEC1"/>
</dbReference>
<dbReference type="SUPFAM" id="SSF46626">
    <property type="entry name" value="Cytochrome c"/>
    <property type="match status" value="1"/>
</dbReference>
<dbReference type="SUPFAM" id="SSF81496">
    <property type="entry name" value="Cytochrome c1 subunit of cytochrome bc1 complex (Ubiquinol-cytochrome c reductase), transmembrane anchor"/>
    <property type="match status" value="1"/>
</dbReference>
<dbReference type="PROSITE" id="PS51007">
    <property type="entry name" value="CYTC"/>
    <property type="match status" value="1"/>
</dbReference>
<comment type="function">
    <text evidence="2">Component of the ubiquinol-cytochrome c oxidoreductase, a multisubunit transmembrane complex that is part of the mitochondrial electron transport chain which drives oxidative phosphorylation. The respiratory chain contains 3 multisubunit complexes succinate dehydrogenase (complex II, CII), ubiquinol-cytochrome c oxidoreductase (cytochrome b-c1 complex, complex III, CIII) and cytochrome c oxidase (complex IV, CIV), that cooperate to transfer electrons derived from NADH and succinate to molecular oxygen, creating an electrochemical gradient over the inner membrane that drives transmembrane transport and the ATP synthase. The cytochrome b-c1 complex catalyzes electron transfer from ubiquinol to cytochrome c, linking this redox reaction to translocation of protons across the mitochondrial inner membrane, with protons being carried across the membrane as hydrogens on the quinol. In the process called Q cycle, 2 protons are consumed from the matrix, 4 protons are released into the intermembrane space and 2 electrons are passed to cytochrome c. Cytochrome c1 is a catalytic core subunit containing a c-type heme. It transfers electrons from the [2Fe-2S] iron-sulfur cluster of the Rieske protein to cytochrome c.</text>
</comment>
<comment type="subunit">
    <text evidence="5 6">Component of the ubiquinol-cytochrome c oxidoreductase (cytochrome b-c1 complex, complex III, CIII), a multisubunit enzyme composed of 10 subunits. The complex is composed of 3 respiratory subunits cytochrome b (MT-CYB), cytochrome c1 (CYC1-1 or CYC1-2) and Rieske protein (UCR1-1 or UCR1-2), 2 core protein subunits MPPalpha1 (or MPPalpha2) and MPPB, and 5 low-molecular weight protein subunits QCR7-1 (or QCR7-2), UCRQ-1 (or UCRQ-2), QCR9, UCRY and probably QCR6-1 (or QCR6-2) (PubMed:18189341). The complex exists as an obligatory dimer and forms supercomplexes (SCs) in the inner mitochondrial membrane with NADH-ubiquinone oxidoreductase (complex I, CI), resulting in different assemblies (supercomplexes SCI(1)III(2) and SCI(2)III(4)) (PubMed:12970493).</text>
</comment>
<comment type="subcellular location">
    <subcellularLocation>
        <location evidence="6">Mitochondrion inner membrane</location>
        <topology evidence="6">Single-pass membrane protein</topology>
    </subcellularLocation>
</comment>
<comment type="PTM">
    <text evidence="1">Binds 1 heme c group covalently per subunit.</text>
</comment>
<comment type="similarity">
    <text evidence="7">Belongs to the cytochrome c family.</text>
</comment>
<feature type="transit peptide" description="Mitochondrion" evidence="3">
    <location>
        <begin position="1"/>
        <end position="64"/>
    </location>
</feature>
<feature type="chain" id="PRO_0000428672" description="Cytochrome c1 1, heme protein, mitochondrial">
    <location>
        <begin position="65"/>
        <end position="307"/>
    </location>
</feature>
<feature type="topological domain" description="Mitochondrial intermembrane" evidence="2">
    <location>
        <begin position="65"/>
        <end position="270"/>
    </location>
</feature>
<feature type="transmembrane region" description="Helical" evidence="3">
    <location>
        <begin position="271"/>
        <end position="288"/>
    </location>
</feature>
<feature type="topological domain" description="Mitochondrial matrix" evidence="2">
    <location>
        <begin position="289"/>
        <end position="307"/>
    </location>
</feature>
<feature type="domain" description="Cytochrome c" evidence="4">
    <location>
        <begin position="90"/>
        <end position="246"/>
    </location>
</feature>
<feature type="binding site" description="covalent" evidence="4">
    <location>
        <position position="103"/>
    </location>
    <ligand>
        <name>heme c</name>
        <dbReference type="ChEBI" id="CHEBI:61717"/>
    </ligand>
</feature>
<feature type="binding site" description="covalent" evidence="4">
    <location>
        <position position="106"/>
    </location>
    <ligand>
        <name>heme c</name>
        <dbReference type="ChEBI" id="CHEBI:61717"/>
    </ligand>
</feature>
<feature type="binding site" description="axial binding residue" evidence="4">
    <location>
        <position position="107"/>
    </location>
    <ligand>
        <name>heme c</name>
        <dbReference type="ChEBI" id="CHEBI:61717"/>
    </ligand>
    <ligandPart>
        <name>Fe</name>
        <dbReference type="ChEBI" id="CHEBI:18248"/>
    </ligandPart>
</feature>
<feature type="binding site" description="axial binding residue" evidence="4">
    <location>
        <position position="226"/>
    </location>
    <ligand>
        <name>heme c</name>
        <dbReference type="ChEBI" id="CHEBI:61717"/>
    </ligand>
    <ligandPart>
        <name>Fe</name>
        <dbReference type="ChEBI" id="CHEBI:18248"/>
    </ligandPart>
</feature>
<feature type="sequence conflict" description="In Ref. 4; AAM65645." evidence="7" ref="4">
    <original>T</original>
    <variation>S</variation>
    <location>
        <position position="53"/>
    </location>
</feature>
<feature type="sequence conflict" description="In Ref. 3; AAL51110/AAL06905." evidence="7" ref="3">
    <original>T</original>
    <variation>A</variation>
    <location>
        <position position="123"/>
    </location>
</feature>
<sequence length="307" mass="33650">MVGGGVIQQILRRKLHSQSLATPVLSWFSSKKAHEDAGSSGVRALALLGAGVTGLLSFSTVASADEAEHGLESPEYPWPHDGILSSYDHASIRRGHQVYQQVCASCHSMSLISYRDLVGVAYTEEEAKAMAAEIEVVDGPNDEGEMFTRPGKLSDRFPQPYANESAARFANGGAYPPDLSLITKARHNGPNYVFALLTGYRDPPAGISIREGLHYNPYFPGGAIAMPKMLNDEAVEYEDGVPATEAQMGKDIVSFLAWAAEPEMEERKLMGFKWIFLLSLALLQAAYYRRLKWSVLKSRKLVLDVVN</sequence>
<keyword id="KW-0249">Electron transport</keyword>
<keyword id="KW-0349">Heme</keyword>
<keyword id="KW-0408">Iron</keyword>
<keyword id="KW-0472">Membrane</keyword>
<keyword id="KW-0479">Metal-binding</keyword>
<keyword id="KW-0496">Mitochondrion</keyword>
<keyword id="KW-0999">Mitochondrion inner membrane</keyword>
<keyword id="KW-1185">Reference proteome</keyword>
<keyword id="KW-0679">Respiratory chain</keyword>
<keyword id="KW-0809">Transit peptide</keyword>
<keyword id="KW-0812">Transmembrane</keyword>
<keyword id="KW-1133">Transmembrane helix</keyword>
<keyword id="KW-0813">Transport</keyword>
<proteinExistence type="evidence at protein level"/>
<reference key="1">
    <citation type="journal article" date="2000" name="DNA Res.">
        <title>Structural analysis of Arabidopsis thaliana chromosome 3. II. Sequence features of the 4,251,695 bp regions covered by 90 P1, TAC and BAC clones.</title>
        <authorList>
            <person name="Kaneko T."/>
            <person name="Katoh T."/>
            <person name="Sato S."/>
            <person name="Nakamura Y."/>
            <person name="Asamizu E."/>
            <person name="Tabata S."/>
        </authorList>
    </citation>
    <scope>NUCLEOTIDE SEQUENCE [LARGE SCALE GENOMIC DNA]</scope>
    <source>
        <strain>cv. Columbia</strain>
    </source>
</reference>
<reference key="2">
    <citation type="journal article" date="2017" name="Plant J.">
        <title>Araport11: a complete reannotation of the Arabidopsis thaliana reference genome.</title>
        <authorList>
            <person name="Cheng C.Y."/>
            <person name="Krishnakumar V."/>
            <person name="Chan A.P."/>
            <person name="Thibaud-Nissen F."/>
            <person name="Schobel S."/>
            <person name="Town C.D."/>
        </authorList>
    </citation>
    <scope>GENOME REANNOTATION</scope>
    <source>
        <strain>cv. Columbia</strain>
    </source>
</reference>
<reference key="3">
    <citation type="journal article" date="2003" name="Science">
        <title>Empirical analysis of transcriptional activity in the Arabidopsis genome.</title>
        <authorList>
            <person name="Yamada K."/>
            <person name="Lim J."/>
            <person name="Dale J.M."/>
            <person name="Chen H."/>
            <person name="Shinn P."/>
            <person name="Palm C.J."/>
            <person name="Southwick A.M."/>
            <person name="Wu H.C."/>
            <person name="Kim C.J."/>
            <person name="Nguyen M."/>
            <person name="Pham P.K."/>
            <person name="Cheuk R.F."/>
            <person name="Karlin-Newmann G."/>
            <person name="Liu S.X."/>
            <person name="Lam B."/>
            <person name="Sakano H."/>
            <person name="Wu T."/>
            <person name="Yu G."/>
            <person name="Miranda M."/>
            <person name="Quach H.L."/>
            <person name="Tripp M."/>
            <person name="Chang C.H."/>
            <person name="Lee J.M."/>
            <person name="Toriumi M.J."/>
            <person name="Chan M.M."/>
            <person name="Tang C.C."/>
            <person name="Onodera C.S."/>
            <person name="Deng J.M."/>
            <person name="Akiyama K."/>
            <person name="Ansari Y."/>
            <person name="Arakawa T."/>
            <person name="Banh J."/>
            <person name="Banno F."/>
            <person name="Bowser L."/>
            <person name="Brooks S.Y."/>
            <person name="Carninci P."/>
            <person name="Chao Q."/>
            <person name="Choy N."/>
            <person name="Enju A."/>
            <person name="Goldsmith A.D."/>
            <person name="Gurjal M."/>
            <person name="Hansen N.F."/>
            <person name="Hayashizaki Y."/>
            <person name="Johnson-Hopson C."/>
            <person name="Hsuan V.W."/>
            <person name="Iida K."/>
            <person name="Karnes M."/>
            <person name="Khan S."/>
            <person name="Koesema E."/>
            <person name="Ishida J."/>
            <person name="Jiang P.X."/>
            <person name="Jones T."/>
            <person name="Kawai J."/>
            <person name="Kamiya A."/>
            <person name="Meyers C."/>
            <person name="Nakajima M."/>
            <person name="Narusaka M."/>
            <person name="Seki M."/>
            <person name="Sakurai T."/>
            <person name="Satou M."/>
            <person name="Tamse R."/>
            <person name="Vaysberg M."/>
            <person name="Wallender E.K."/>
            <person name="Wong C."/>
            <person name="Yamamura Y."/>
            <person name="Yuan S."/>
            <person name="Shinozaki K."/>
            <person name="Davis R.W."/>
            <person name="Theologis A."/>
            <person name="Ecker J.R."/>
        </authorList>
    </citation>
    <scope>NUCLEOTIDE SEQUENCE [LARGE SCALE MRNA]</scope>
    <source>
        <strain>cv. Columbia</strain>
    </source>
</reference>
<reference key="4">
    <citation type="submission" date="2002-03" db="EMBL/GenBank/DDBJ databases">
        <title>Full-length cDNA from Arabidopsis thaliana.</title>
        <authorList>
            <person name="Brover V.V."/>
            <person name="Troukhan M.E."/>
            <person name="Alexandrov N.A."/>
            <person name="Lu Y.-P."/>
            <person name="Flavell R.B."/>
            <person name="Feldmann K.A."/>
        </authorList>
    </citation>
    <scope>NUCLEOTIDE SEQUENCE [LARGE SCALE MRNA]</scope>
</reference>
<reference key="5">
    <citation type="journal article" date="2003" name="Plant Physiol.">
        <title>New insights into the respiratory chain of plant mitochondria. Supercomplexes and a unique composition of complex II.</title>
        <authorList>
            <person name="Eubel H."/>
            <person name="Jansch L."/>
            <person name="Braun H.P."/>
        </authorList>
    </citation>
    <scope>SUBUNIT</scope>
</reference>
<reference key="6">
    <citation type="journal article" date="2007" name="Mol. Cell. Proteomics">
        <title>Multidimensional protein identification technology (MudPIT) analysis of ubiquitinated proteins in plants.</title>
        <authorList>
            <person name="Maor R."/>
            <person name="Jones A."/>
            <person name="Nuehse T.S."/>
            <person name="Studholme D.J."/>
            <person name="Peck S.C."/>
            <person name="Shirasu K."/>
        </authorList>
    </citation>
    <scope>IDENTIFICATION BY MASS SPECTROMETRY [LARGE SCALE ANALYSIS]</scope>
    <source>
        <strain>cv. Landsberg erecta</strain>
    </source>
</reference>
<reference key="7">
    <citation type="journal article" date="2008" name="J. Proteome Res.">
        <title>Resolving and identifying protein components of plant mitochondrial respiratory complexes using three dimensions of gel electrophoresis.</title>
        <authorList>
            <person name="Meyer E.H."/>
            <person name="Taylor N.L."/>
            <person name="Millar A.H."/>
        </authorList>
    </citation>
    <scope>SUBCELLULAR LOCATION</scope>
    <scope>SUBUNIT</scope>
    <scope>IDENTIFICATION BY MASS SPECTROMETRY</scope>
    <scope>REVIEW</scope>
    <scope>NOMENCLATURE</scope>
</reference>
<accession>Q9LK29</accession>
<accession>Q8LA08</accession>
<accession>Q940N2</accession>